<feature type="chain" id="PRO_0000113542" description="Serine hydroxymethyltransferase 2">
    <location>
        <begin position="1"/>
        <end position="415"/>
    </location>
</feature>
<feature type="binding site" evidence="1">
    <location>
        <position position="121"/>
    </location>
    <ligand>
        <name>(6S)-5,6,7,8-tetrahydrofolate</name>
        <dbReference type="ChEBI" id="CHEBI:57453"/>
    </ligand>
</feature>
<feature type="binding site" evidence="1">
    <location>
        <begin position="125"/>
        <end position="127"/>
    </location>
    <ligand>
        <name>(6S)-5,6,7,8-tetrahydrofolate</name>
        <dbReference type="ChEBI" id="CHEBI:57453"/>
    </ligand>
</feature>
<feature type="site" description="Plays an important role in substrate specificity" evidence="1">
    <location>
        <position position="228"/>
    </location>
</feature>
<feature type="modified residue" description="N6-(pyridoxal phosphate)lysine" evidence="1">
    <location>
        <position position="229"/>
    </location>
</feature>
<organism>
    <name type="scientific">Bordetella parapertussis (strain 12822 / ATCC BAA-587 / NCTC 13253)</name>
    <dbReference type="NCBI Taxonomy" id="257311"/>
    <lineage>
        <taxon>Bacteria</taxon>
        <taxon>Pseudomonadati</taxon>
        <taxon>Pseudomonadota</taxon>
        <taxon>Betaproteobacteria</taxon>
        <taxon>Burkholderiales</taxon>
        <taxon>Alcaligenaceae</taxon>
        <taxon>Bordetella</taxon>
    </lineage>
</organism>
<dbReference type="EC" id="2.1.2.1" evidence="1"/>
<dbReference type="EMBL" id="BX640435">
    <property type="protein sequence ID" value="CAE39158.1"/>
    <property type="molecule type" value="Genomic_DNA"/>
</dbReference>
<dbReference type="RefSeq" id="WP_010929290.1">
    <property type="nucleotide sequence ID" value="NC_002928.3"/>
</dbReference>
<dbReference type="SMR" id="Q7W400"/>
<dbReference type="GeneID" id="93205675"/>
<dbReference type="KEGG" id="bpa:BPP3875"/>
<dbReference type="HOGENOM" id="CLU_022477_2_1_4"/>
<dbReference type="UniPathway" id="UPA00193"/>
<dbReference type="UniPathway" id="UPA00288">
    <property type="reaction ID" value="UER01023"/>
</dbReference>
<dbReference type="Proteomes" id="UP000001421">
    <property type="component" value="Chromosome"/>
</dbReference>
<dbReference type="GO" id="GO:0005829">
    <property type="term" value="C:cytosol"/>
    <property type="evidence" value="ECO:0007669"/>
    <property type="project" value="TreeGrafter"/>
</dbReference>
<dbReference type="GO" id="GO:0004372">
    <property type="term" value="F:glycine hydroxymethyltransferase activity"/>
    <property type="evidence" value="ECO:0007669"/>
    <property type="project" value="UniProtKB-UniRule"/>
</dbReference>
<dbReference type="GO" id="GO:0030170">
    <property type="term" value="F:pyridoxal phosphate binding"/>
    <property type="evidence" value="ECO:0007669"/>
    <property type="project" value="UniProtKB-UniRule"/>
</dbReference>
<dbReference type="GO" id="GO:0019264">
    <property type="term" value="P:glycine biosynthetic process from serine"/>
    <property type="evidence" value="ECO:0007669"/>
    <property type="project" value="UniProtKB-UniRule"/>
</dbReference>
<dbReference type="GO" id="GO:0035999">
    <property type="term" value="P:tetrahydrofolate interconversion"/>
    <property type="evidence" value="ECO:0007669"/>
    <property type="project" value="UniProtKB-UniRule"/>
</dbReference>
<dbReference type="CDD" id="cd00378">
    <property type="entry name" value="SHMT"/>
    <property type="match status" value="1"/>
</dbReference>
<dbReference type="FunFam" id="3.40.640.10:FF:000001">
    <property type="entry name" value="Serine hydroxymethyltransferase"/>
    <property type="match status" value="1"/>
</dbReference>
<dbReference type="FunFam" id="3.90.1150.10:FF:000003">
    <property type="entry name" value="Serine hydroxymethyltransferase"/>
    <property type="match status" value="1"/>
</dbReference>
<dbReference type="Gene3D" id="3.90.1150.10">
    <property type="entry name" value="Aspartate Aminotransferase, domain 1"/>
    <property type="match status" value="1"/>
</dbReference>
<dbReference type="Gene3D" id="3.40.640.10">
    <property type="entry name" value="Type I PLP-dependent aspartate aminotransferase-like (Major domain)"/>
    <property type="match status" value="1"/>
</dbReference>
<dbReference type="HAMAP" id="MF_00051">
    <property type="entry name" value="SHMT"/>
    <property type="match status" value="1"/>
</dbReference>
<dbReference type="InterPro" id="IPR015424">
    <property type="entry name" value="PyrdxlP-dep_Trfase"/>
</dbReference>
<dbReference type="InterPro" id="IPR015421">
    <property type="entry name" value="PyrdxlP-dep_Trfase_major"/>
</dbReference>
<dbReference type="InterPro" id="IPR015422">
    <property type="entry name" value="PyrdxlP-dep_Trfase_small"/>
</dbReference>
<dbReference type="InterPro" id="IPR001085">
    <property type="entry name" value="Ser_HO-MeTrfase"/>
</dbReference>
<dbReference type="InterPro" id="IPR049943">
    <property type="entry name" value="Ser_HO-MeTrfase-like"/>
</dbReference>
<dbReference type="InterPro" id="IPR019798">
    <property type="entry name" value="Ser_HO-MeTrfase_PLP_BS"/>
</dbReference>
<dbReference type="InterPro" id="IPR039429">
    <property type="entry name" value="SHMT-like_dom"/>
</dbReference>
<dbReference type="NCBIfam" id="NF000586">
    <property type="entry name" value="PRK00011.1"/>
    <property type="match status" value="1"/>
</dbReference>
<dbReference type="PANTHER" id="PTHR11680">
    <property type="entry name" value="SERINE HYDROXYMETHYLTRANSFERASE"/>
    <property type="match status" value="1"/>
</dbReference>
<dbReference type="PANTHER" id="PTHR11680:SF50">
    <property type="entry name" value="SERINE HYDROXYMETHYLTRANSFERASE"/>
    <property type="match status" value="1"/>
</dbReference>
<dbReference type="Pfam" id="PF00464">
    <property type="entry name" value="SHMT"/>
    <property type="match status" value="1"/>
</dbReference>
<dbReference type="PIRSF" id="PIRSF000412">
    <property type="entry name" value="SHMT"/>
    <property type="match status" value="1"/>
</dbReference>
<dbReference type="SUPFAM" id="SSF53383">
    <property type="entry name" value="PLP-dependent transferases"/>
    <property type="match status" value="1"/>
</dbReference>
<dbReference type="PROSITE" id="PS00096">
    <property type="entry name" value="SHMT"/>
    <property type="match status" value="1"/>
</dbReference>
<proteinExistence type="inferred from homology"/>
<evidence type="ECO:0000255" key="1">
    <source>
        <dbReference type="HAMAP-Rule" id="MF_00051"/>
    </source>
</evidence>
<comment type="function">
    <text evidence="1">Catalyzes the reversible interconversion of serine and glycine with tetrahydrofolate (THF) serving as the one-carbon carrier. This reaction serves as the major source of one-carbon groups required for the biosynthesis of purines, thymidylate, methionine, and other important biomolecules. Also exhibits THF-independent aldolase activity toward beta-hydroxyamino acids, producing glycine and aldehydes, via a retro-aldol mechanism.</text>
</comment>
<comment type="catalytic activity">
    <reaction evidence="1">
        <text>(6R)-5,10-methylene-5,6,7,8-tetrahydrofolate + glycine + H2O = (6S)-5,6,7,8-tetrahydrofolate + L-serine</text>
        <dbReference type="Rhea" id="RHEA:15481"/>
        <dbReference type="ChEBI" id="CHEBI:15377"/>
        <dbReference type="ChEBI" id="CHEBI:15636"/>
        <dbReference type="ChEBI" id="CHEBI:33384"/>
        <dbReference type="ChEBI" id="CHEBI:57305"/>
        <dbReference type="ChEBI" id="CHEBI:57453"/>
        <dbReference type="EC" id="2.1.2.1"/>
    </reaction>
</comment>
<comment type="cofactor">
    <cofactor evidence="1">
        <name>pyridoxal 5'-phosphate</name>
        <dbReference type="ChEBI" id="CHEBI:597326"/>
    </cofactor>
</comment>
<comment type="pathway">
    <text evidence="1">One-carbon metabolism; tetrahydrofolate interconversion.</text>
</comment>
<comment type="pathway">
    <text evidence="1">Amino-acid biosynthesis; glycine biosynthesis; glycine from L-serine: step 1/1.</text>
</comment>
<comment type="subunit">
    <text evidence="1">Homodimer.</text>
</comment>
<comment type="subcellular location">
    <subcellularLocation>
        <location evidence="1">Cytoplasm</location>
    </subcellularLocation>
</comment>
<comment type="similarity">
    <text evidence="1">Belongs to the SHMT family.</text>
</comment>
<sequence length="415" mass="44763">MFNRNLTLDQVDPDVWAAIQKEDVRQEQHIELIASENYASPAVMQAQGTQLTNKYAEGYPGKRYYGGCEYVDVVEQLAIDRLKQIFGAEAANVQPNSGSQANQGVYMAVLKPGDTVLGMSLAEGGHLTHGASVNASGKLYNFVPYGLDADEVLDYAQVERLTKEHKPKLIVAGASAYALHIDFERMARIAHDNGALFMVDIAHYAGLVAGGAYPNPVPHADFVTSTTHKSLRGPRGGVIMMKAEVEKAVNSAIFPGIQGGPLMHVIAAKAVAFKEALSPEFQDYAQQVVKNAKVLADTLVKRGLRIVSGRTESHVMLVDLRPKGITGKEAEAVLGQAHITVNKNAIPNDPEKPFVTSGIRLGTPAMTTRGFKEAEAELTANLIADVLDNPRDEANIAAVRARVNELTARLPVYGN</sequence>
<keyword id="KW-0028">Amino-acid biosynthesis</keyword>
<keyword id="KW-0963">Cytoplasm</keyword>
<keyword id="KW-0554">One-carbon metabolism</keyword>
<keyword id="KW-0663">Pyridoxal phosphate</keyword>
<keyword id="KW-0808">Transferase</keyword>
<gene>
    <name evidence="1" type="primary">glyA2</name>
    <name type="ordered locus">BPP3875</name>
</gene>
<protein>
    <recommendedName>
        <fullName evidence="1">Serine hydroxymethyltransferase 2</fullName>
        <shortName evidence="1">SHMT 2</shortName>
        <shortName evidence="1">Serine methylase 2</shortName>
        <ecNumber evidence="1">2.1.2.1</ecNumber>
    </recommendedName>
</protein>
<name>GLYA2_BORPA</name>
<reference key="1">
    <citation type="journal article" date="2003" name="Nat. Genet.">
        <title>Comparative analysis of the genome sequences of Bordetella pertussis, Bordetella parapertussis and Bordetella bronchiseptica.</title>
        <authorList>
            <person name="Parkhill J."/>
            <person name="Sebaihia M."/>
            <person name="Preston A."/>
            <person name="Murphy L.D."/>
            <person name="Thomson N.R."/>
            <person name="Harris D.E."/>
            <person name="Holden M.T.G."/>
            <person name="Churcher C.M."/>
            <person name="Bentley S.D."/>
            <person name="Mungall K.L."/>
            <person name="Cerdeno-Tarraga A.-M."/>
            <person name="Temple L."/>
            <person name="James K.D."/>
            <person name="Harris B."/>
            <person name="Quail M.A."/>
            <person name="Achtman M."/>
            <person name="Atkin R."/>
            <person name="Baker S."/>
            <person name="Basham D."/>
            <person name="Bason N."/>
            <person name="Cherevach I."/>
            <person name="Chillingworth T."/>
            <person name="Collins M."/>
            <person name="Cronin A."/>
            <person name="Davis P."/>
            <person name="Doggett J."/>
            <person name="Feltwell T."/>
            <person name="Goble A."/>
            <person name="Hamlin N."/>
            <person name="Hauser H."/>
            <person name="Holroyd S."/>
            <person name="Jagels K."/>
            <person name="Leather S."/>
            <person name="Moule S."/>
            <person name="Norberczak H."/>
            <person name="O'Neil S."/>
            <person name="Ormond D."/>
            <person name="Price C."/>
            <person name="Rabbinowitsch E."/>
            <person name="Rutter S."/>
            <person name="Sanders M."/>
            <person name="Saunders D."/>
            <person name="Seeger K."/>
            <person name="Sharp S."/>
            <person name="Simmonds M."/>
            <person name="Skelton J."/>
            <person name="Squares R."/>
            <person name="Squares S."/>
            <person name="Stevens K."/>
            <person name="Unwin L."/>
            <person name="Whitehead S."/>
            <person name="Barrell B.G."/>
            <person name="Maskell D.J."/>
        </authorList>
    </citation>
    <scope>NUCLEOTIDE SEQUENCE [LARGE SCALE GENOMIC DNA]</scope>
    <source>
        <strain>12822 / ATCC BAA-587 / NCTC 13253</strain>
    </source>
</reference>
<accession>Q7W400</accession>